<proteinExistence type="inferred from homology"/>
<reference key="1">
    <citation type="journal article" date="2001" name="J. Bacteriol.">
        <title>Genome of the bacterium Streptococcus pneumoniae strain R6.</title>
        <authorList>
            <person name="Hoskins J."/>
            <person name="Alborn W.E. Jr."/>
            <person name="Arnold J."/>
            <person name="Blaszczak L.C."/>
            <person name="Burgett S."/>
            <person name="DeHoff B.S."/>
            <person name="Estrem S.T."/>
            <person name="Fritz L."/>
            <person name="Fu D.-J."/>
            <person name="Fuller W."/>
            <person name="Geringer C."/>
            <person name="Gilmour R."/>
            <person name="Glass J.S."/>
            <person name="Khoja H."/>
            <person name="Kraft A.R."/>
            <person name="Lagace R.E."/>
            <person name="LeBlanc D.J."/>
            <person name="Lee L.N."/>
            <person name="Lefkowitz E.J."/>
            <person name="Lu J."/>
            <person name="Matsushima P."/>
            <person name="McAhren S.M."/>
            <person name="McHenney M."/>
            <person name="McLeaster K."/>
            <person name="Mundy C.W."/>
            <person name="Nicas T.I."/>
            <person name="Norris F.H."/>
            <person name="O'Gara M."/>
            <person name="Peery R.B."/>
            <person name="Robertson G.T."/>
            <person name="Rockey P."/>
            <person name="Sun P.-M."/>
            <person name="Winkler M.E."/>
            <person name="Yang Y."/>
            <person name="Young-Bellido M."/>
            <person name="Zhao G."/>
            <person name="Zook C.A."/>
            <person name="Baltz R.H."/>
            <person name="Jaskunas S.R."/>
            <person name="Rosteck P.R. Jr."/>
            <person name="Skatrud P.L."/>
            <person name="Glass J.I."/>
        </authorList>
    </citation>
    <scope>NUCLEOTIDE SEQUENCE [LARGE SCALE GENOMIC DNA]</scope>
    <source>
        <strain>ATCC BAA-255 / R6</strain>
    </source>
</reference>
<gene>
    <name evidence="1" type="primary">cca</name>
    <name type="ordered locus">spr1413</name>
</gene>
<keyword id="KW-0067">ATP-binding</keyword>
<keyword id="KW-0460">Magnesium</keyword>
<keyword id="KW-0479">Metal-binding</keyword>
<keyword id="KW-0547">Nucleotide-binding</keyword>
<keyword id="KW-0548">Nucleotidyltransferase</keyword>
<keyword id="KW-1185">Reference proteome</keyword>
<keyword id="KW-0692">RNA repair</keyword>
<keyword id="KW-0694">RNA-binding</keyword>
<keyword id="KW-0808">Transferase</keyword>
<keyword id="KW-0819">tRNA processing</keyword>
<organism>
    <name type="scientific">Streptococcus pneumoniae (strain ATCC BAA-255 / R6)</name>
    <dbReference type="NCBI Taxonomy" id="171101"/>
    <lineage>
        <taxon>Bacteria</taxon>
        <taxon>Bacillati</taxon>
        <taxon>Bacillota</taxon>
        <taxon>Bacilli</taxon>
        <taxon>Lactobacillales</taxon>
        <taxon>Streptococcaceae</taxon>
        <taxon>Streptococcus</taxon>
    </lineage>
</organism>
<name>CCA_STRR6</name>
<accession>Q8CWQ3</accession>
<sequence>MRLTQMPSEFQKALPVLEKIKEAGFEAYFVGGSVRDALLHSPIHDVDIATSSYPEETKQIFPRTADIGIEHGTVLVLDGDEEYEVTTFRTEDVYVDYRRPSAVSFVRSLEEDLKRRDFTVNAFALDETGEIVDLFHGLEDLEKQVLRAVGVASERFNEDALRIMRGFRFQASLGFALEPETFKAMKTLTPLLEKISVERTFVEFDKLLLAPFWRRGLASMIESQAYDYLPDMASSQDKLNRLFDLETDFTFESSEQAWAALLWALEIENAQSFLKSWKTSRQFAKQVQDLLIILALRENGELSKRDCYRFDIDLLLQAENLRQAQGKEVNPQAITEKYQSLTIHDKKEIQINGGILIKEYGYQPGPDLGEILTEIEFAIVDGELENNREAIHAYLREKK</sequence>
<feature type="chain" id="PRO_0000139057" description="CCA-adding enzyme">
    <location>
        <begin position="1"/>
        <end position="399"/>
    </location>
</feature>
<feature type="binding site" evidence="1">
    <location>
        <position position="32"/>
    </location>
    <ligand>
        <name>ATP</name>
        <dbReference type="ChEBI" id="CHEBI:30616"/>
    </ligand>
</feature>
<feature type="binding site" evidence="1">
    <location>
        <position position="32"/>
    </location>
    <ligand>
        <name>CTP</name>
        <dbReference type="ChEBI" id="CHEBI:37563"/>
    </ligand>
</feature>
<feature type="binding site" evidence="1">
    <location>
        <position position="35"/>
    </location>
    <ligand>
        <name>ATP</name>
        <dbReference type="ChEBI" id="CHEBI:30616"/>
    </ligand>
</feature>
<feature type="binding site" evidence="1">
    <location>
        <position position="35"/>
    </location>
    <ligand>
        <name>CTP</name>
        <dbReference type="ChEBI" id="CHEBI:37563"/>
    </ligand>
</feature>
<feature type="binding site" evidence="1">
    <location>
        <position position="45"/>
    </location>
    <ligand>
        <name>Mg(2+)</name>
        <dbReference type="ChEBI" id="CHEBI:18420"/>
    </ligand>
</feature>
<feature type="binding site" evidence="1">
    <location>
        <position position="47"/>
    </location>
    <ligand>
        <name>Mg(2+)</name>
        <dbReference type="ChEBI" id="CHEBI:18420"/>
    </ligand>
</feature>
<feature type="binding site" evidence="1">
    <location>
        <position position="116"/>
    </location>
    <ligand>
        <name>ATP</name>
        <dbReference type="ChEBI" id="CHEBI:30616"/>
    </ligand>
</feature>
<feature type="binding site" evidence="1">
    <location>
        <position position="116"/>
    </location>
    <ligand>
        <name>CTP</name>
        <dbReference type="ChEBI" id="CHEBI:37563"/>
    </ligand>
</feature>
<feature type="binding site" evidence="1">
    <location>
        <position position="159"/>
    </location>
    <ligand>
        <name>ATP</name>
        <dbReference type="ChEBI" id="CHEBI:30616"/>
    </ligand>
</feature>
<feature type="binding site" evidence="1">
    <location>
        <position position="159"/>
    </location>
    <ligand>
        <name>CTP</name>
        <dbReference type="ChEBI" id="CHEBI:37563"/>
    </ligand>
</feature>
<feature type="binding site" evidence="1">
    <location>
        <position position="162"/>
    </location>
    <ligand>
        <name>ATP</name>
        <dbReference type="ChEBI" id="CHEBI:30616"/>
    </ligand>
</feature>
<feature type="binding site" evidence="1">
    <location>
        <position position="162"/>
    </location>
    <ligand>
        <name>CTP</name>
        <dbReference type="ChEBI" id="CHEBI:37563"/>
    </ligand>
</feature>
<feature type="binding site" evidence="1">
    <location>
        <position position="165"/>
    </location>
    <ligand>
        <name>ATP</name>
        <dbReference type="ChEBI" id="CHEBI:30616"/>
    </ligand>
</feature>
<feature type="binding site" evidence="1">
    <location>
        <position position="165"/>
    </location>
    <ligand>
        <name>CTP</name>
        <dbReference type="ChEBI" id="CHEBI:37563"/>
    </ligand>
</feature>
<feature type="binding site" evidence="1">
    <location>
        <position position="168"/>
    </location>
    <ligand>
        <name>ATP</name>
        <dbReference type="ChEBI" id="CHEBI:30616"/>
    </ligand>
</feature>
<feature type="binding site" evidence="1">
    <location>
        <position position="168"/>
    </location>
    <ligand>
        <name>CTP</name>
        <dbReference type="ChEBI" id="CHEBI:37563"/>
    </ligand>
</feature>
<comment type="function">
    <text evidence="1">Catalyzes the addition and repair of the essential 3'-terminal CCA sequence in tRNAs without using a nucleic acid template. Adds these three nucleotides in the order of C, C, and A to the tRNA nucleotide-73, using CTP and ATP as substrates and producing inorganic pyrophosphate. tRNA 3'-terminal CCA addition is required both for tRNA processing and repair. Also involved in tRNA surveillance by mediating tandem CCA addition to generate a CCACCA at the 3' terminus of unstable tRNAs. While stable tRNAs receive only 3'-terminal CCA, unstable tRNAs are marked with CCACCA and rapidly degraded.</text>
</comment>
<comment type="catalytic activity">
    <reaction evidence="1">
        <text>a tRNA precursor + 2 CTP + ATP = a tRNA with a 3' CCA end + 3 diphosphate</text>
        <dbReference type="Rhea" id="RHEA:14433"/>
        <dbReference type="Rhea" id="RHEA-COMP:10465"/>
        <dbReference type="Rhea" id="RHEA-COMP:10468"/>
        <dbReference type="ChEBI" id="CHEBI:30616"/>
        <dbReference type="ChEBI" id="CHEBI:33019"/>
        <dbReference type="ChEBI" id="CHEBI:37563"/>
        <dbReference type="ChEBI" id="CHEBI:74896"/>
        <dbReference type="ChEBI" id="CHEBI:83071"/>
        <dbReference type="EC" id="2.7.7.72"/>
    </reaction>
</comment>
<comment type="catalytic activity">
    <reaction evidence="1">
        <text>a tRNA with a 3' CCA end + 2 CTP + ATP = a tRNA with a 3' CCACCA end + 3 diphosphate</text>
        <dbReference type="Rhea" id="RHEA:76235"/>
        <dbReference type="Rhea" id="RHEA-COMP:10468"/>
        <dbReference type="Rhea" id="RHEA-COMP:18655"/>
        <dbReference type="ChEBI" id="CHEBI:30616"/>
        <dbReference type="ChEBI" id="CHEBI:33019"/>
        <dbReference type="ChEBI" id="CHEBI:37563"/>
        <dbReference type="ChEBI" id="CHEBI:83071"/>
        <dbReference type="ChEBI" id="CHEBI:195187"/>
    </reaction>
    <physiologicalReaction direction="left-to-right" evidence="1">
        <dbReference type="Rhea" id="RHEA:76236"/>
    </physiologicalReaction>
</comment>
<comment type="cofactor">
    <cofactor evidence="1">
        <name>Mg(2+)</name>
        <dbReference type="ChEBI" id="CHEBI:18420"/>
    </cofactor>
</comment>
<comment type="subunit">
    <text evidence="1">Homodimer.</text>
</comment>
<comment type="miscellaneous">
    <text evidence="1">A single active site specifically recognizes both ATP and CTP and is responsible for their addition.</text>
</comment>
<comment type="similarity">
    <text evidence="1">Belongs to the tRNA nucleotidyltransferase/poly(A) polymerase family. Bacterial CCA-adding enzyme type 3 subfamily.</text>
</comment>
<protein>
    <recommendedName>
        <fullName evidence="1">CCA-adding enzyme</fullName>
        <ecNumber evidence="1">2.7.7.72</ecNumber>
    </recommendedName>
    <alternativeName>
        <fullName evidence="1">CCA tRNA nucleotidyltransferase</fullName>
    </alternativeName>
    <alternativeName>
        <fullName evidence="1">tRNA CCA-pyrophosphorylase</fullName>
    </alternativeName>
    <alternativeName>
        <fullName evidence="1">tRNA adenylyl-/cytidylyl- transferase</fullName>
    </alternativeName>
    <alternativeName>
        <fullName evidence="1">tRNA nucleotidyltransferase</fullName>
    </alternativeName>
    <alternativeName>
        <fullName evidence="1">tRNA-NT</fullName>
    </alternativeName>
</protein>
<evidence type="ECO:0000255" key="1">
    <source>
        <dbReference type="HAMAP-Rule" id="MF_01263"/>
    </source>
</evidence>
<dbReference type="EC" id="2.7.7.72" evidence="1"/>
<dbReference type="EMBL" id="AE007317">
    <property type="protein sequence ID" value="AAL00217.1"/>
    <property type="molecule type" value="Genomic_DNA"/>
</dbReference>
<dbReference type="PIR" id="D98048">
    <property type="entry name" value="D98048"/>
</dbReference>
<dbReference type="RefSeq" id="NP_359006.1">
    <property type="nucleotide sequence ID" value="NC_003098.1"/>
</dbReference>
<dbReference type="RefSeq" id="WP_001808398.1">
    <property type="nucleotide sequence ID" value="NC_003098.1"/>
</dbReference>
<dbReference type="SMR" id="Q8CWQ3"/>
<dbReference type="STRING" id="171101.spr1413"/>
<dbReference type="KEGG" id="spr:spr1413"/>
<dbReference type="PATRIC" id="fig|171101.6.peg.1529"/>
<dbReference type="eggNOG" id="COG0617">
    <property type="taxonomic scope" value="Bacteria"/>
</dbReference>
<dbReference type="HOGENOM" id="CLU_015961_3_1_9"/>
<dbReference type="Proteomes" id="UP000000586">
    <property type="component" value="Chromosome"/>
</dbReference>
<dbReference type="GO" id="GO:0005524">
    <property type="term" value="F:ATP binding"/>
    <property type="evidence" value="ECO:0007669"/>
    <property type="project" value="UniProtKB-UniRule"/>
</dbReference>
<dbReference type="GO" id="GO:0004810">
    <property type="term" value="F:CCA tRNA nucleotidyltransferase activity"/>
    <property type="evidence" value="ECO:0007669"/>
    <property type="project" value="UniProtKB-UniRule"/>
</dbReference>
<dbReference type="GO" id="GO:0000287">
    <property type="term" value="F:magnesium ion binding"/>
    <property type="evidence" value="ECO:0007669"/>
    <property type="project" value="UniProtKB-UniRule"/>
</dbReference>
<dbReference type="GO" id="GO:0000049">
    <property type="term" value="F:tRNA binding"/>
    <property type="evidence" value="ECO:0000318"/>
    <property type="project" value="GO_Central"/>
</dbReference>
<dbReference type="GO" id="GO:0042245">
    <property type="term" value="P:RNA repair"/>
    <property type="evidence" value="ECO:0007669"/>
    <property type="project" value="UniProtKB-KW"/>
</dbReference>
<dbReference type="GO" id="GO:0001680">
    <property type="term" value="P:tRNA 3'-terminal CCA addition"/>
    <property type="evidence" value="ECO:0007669"/>
    <property type="project" value="UniProtKB-UniRule"/>
</dbReference>
<dbReference type="GO" id="GO:0008033">
    <property type="term" value="P:tRNA processing"/>
    <property type="evidence" value="ECO:0000318"/>
    <property type="project" value="GO_Central"/>
</dbReference>
<dbReference type="CDD" id="cd05398">
    <property type="entry name" value="NT_ClassII-CCAase"/>
    <property type="match status" value="1"/>
</dbReference>
<dbReference type="Gene3D" id="1.10.110.30">
    <property type="match status" value="1"/>
</dbReference>
<dbReference type="Gene3D" id="1.10.246.80">
    <property type="match status" value="1"/>
</dbReference>
<dbReference type="Gene3D" id="1.20.58.560">
    <property type="match status" value="1"/>
</dbReference>
<dbReference type="Gene3D" id="3.30.460.10">
    <property type="entry name" value="Beta Polymerase, domain 2"/>
    <property type="match status" value="1"/>
</dbReference>
<dbReference type="HAMAP" id="MF_01263">
    <property type="entry name" value="CCA_bact_type3"/>
    <property type="match status" value="1"/>
</dbReference>
<dbReference type="InterPro" id="IPR050264">
    <property type="entry name" value="Bact_CCA-adding_enz_type3_sf"/>
</dbReference>
<dbReference type="InterPro" id="IPR032810">
    <property type="entry name" value="CCA-adding_enz_C"/>
</dbReference>
<dbReference type="InterPro" id="IPR023068">
    <property type="entry name" value="CCA-adding_enz_firmicutes"/>
</dbReference>
<dbReference type="InterPro" id="IPR043519">
    <property type="entry name" value="NT_sf"/>
</dbReference>
<dbReference type="InterPro" id="IPR002646">
    <property type="entry name" value="PolA_pol_head_dom"/>
</dbReference>
<dbReference type="InterPro" id="IPR032828">
    <property type="entry name" value="PolyA_RNA-bd"/>
</dbReference>
<dbReference type="NCBIfam" id="NF009814">
    <property type="entry name" value="PRK13299.1"/>
    <property type="match status" value="1"/>
</dbReference>
<dbReference type="PANTHER" id="PTHR46173">
    <property type="entry name" value="CCA TRNA NUCLEOTIDYLTRANSFERASE 1, MITOCHONDRIAL"/>
    <property type="match status" value="1"/>
</dbReference>
<dbReference type="PANTHER" id="PTHR46173:SF1">
    <property type="entry name" value="CCA TRNA NUCLEOTIDYLTRANSFERASE 1, MITOCHONDRIAL"/>
    <property type="match status" value="1"/>
</dbReference>
<dbReference type="Pfam" id="PF01743">
    <property type="entry name" value="PolyA_pol"/>
    <property type="match status" value="1"/>
</dbReference>
<dbReference type="Pfam" id="PF12627">
    <property type="entry name" value="PolyA_pol_RNAbd"/>
    <property type="match status" value="1"/>
</dbReference>
<dbReference type="Pfam" id="PF13735">
    <property type="entry name" value="tRNA_NucTran2_2"/>
    <property type="match status" value="1"/>
</dbReference>
<dbReference type="SUPFAM" id="SSF81301">
    <property type="entry name" value="Nucleotidyltransferase"/>
    <property type="match status" value="1"/>
</dbReference>
<dbReference type="SUPFAM" id="SSF81891">
    <property type="entry name" value="Poly A polymerase C-terminal region-like"/>
    <property type="match status" value="1"/>
</dbReference>